<reference key="1">
    <citation type="journal article" date="2008" name="J. Bacteriol.">
        <title>Genome sequence of Staphylococcus aureus strain Newman and comparative analysis of staphylococcal genomes: polymorphism and evolution of two major pathogenicity islands.</title>
        <authorList>
            <person name="Baba T."/>
            <person name="Bae T."/>
            <person name="Schneewind O."/>
            <person name="Takeuchi F."/>
            <person name="Hiramatsu K."/>
        </authorList>
    </citation>
    <scope>NUCLEOTIDE SEQUENCE [LARGE SCALE GENOMIC DNA]</scope>
    <source>
        <strain>Newman</strain>
    </source>
</reference>
<protein>
    <recommendedName>
        <fullName evidence="1">Formimidoylglutamase</fullName>
        <ecNumber evidence="1">3.5.3.8</ecNumber>
    </recommendedName>
    <alternativeName>
        <fullName evidence="1">Formiminoglutamase</fullName>
    </alternativeName>
    <alternativeName>
        <fullName evidence="1">Formiminoglutamate hydrolase</fullName>
    </alternativeName>
</protein>
<accession>A6QJH5</accession>
<feature type="chain" id="PRO_1000072806" description="Formimidoylglutamase">
    <location>
        <begin position="1"/>
        <end position="311"/>
    </location>
</feature>
<feature type="binding site" evidence="1">
    <location>
        <position position="130"/>
    </location>
    <ligand>
        <name>Mn(2+)</name>
        <dbReference type="ChEBI" id="CHEBI:29035"/>
        <label>1</label>
    </ligand>
</feature>
<feature type="binding site" evidence="1">
    <location>
        <position position="155"/>
    </location>
    <ligand>
        <name>Mn(2+)</name>
        <dbReference type="ChEBI" id="CHEBI:29035"/>
        <label>1</label>
    </ligand>
</feature>
<feature type="binding site" evidence="1">
    <location>
        <position position="155"/>
    </location>
    <ligand>
        <name>Mn(2+)</name>
        <dbReference type="ChEBI" id="CHEBI:29035"/>
        <label>2</label>
    </ligand>
</feature>
<feature type="binding site" evidence="1">
    <location>
        <position position="157"/>
    </location>
    <ligand>
        <name>Mn(2+)</name>
        <dbReference type="ChEBI" id="CHEBI:29035"/>
        <label>2</label>
    </ligand>
</feature>
<feature type="binding site" evidence="1">
    <location>
        <position position="159"/>
    </location>
    <ligand>
        <name>Mn(2+)</name>
        <dbReference type="ChEBI" id="CHEBI:29035"/>
        <label>1</label>
    </ligand>
</feature>
<feature type="binding site" evidence="1">
    <location>
        <position position="242"/>
    </location>
    <ligand>
        <name>Mn(2+)</name>
        <dbReference type="ChEBI" id="CHEBI:29035"/>
        <label>1</label>
    </ligand>
</feature>
<feature type="binding site" evidence="1">
    <location>
        <position position="242"/>
    </location>
    <ligand>
        <name>Mn(2+)</name>
        <dbReference type="ChEBI" id="CHEBI:29035"/>
        <label>2</label>
    </ligand>
</feature>
<feature type="binding site" evidence="1">
    <location>
        <position position="244"/>
    </location>
    <ligand>
        <name>Mn(2+)</name>
        <dbReference type="ChEBI" id="CHEBI:29035"/>
        <label>2</label>
    </ligand>
</feature>
<evidence type="ECO:0000255" key="1">
    <source>
        <dbReference type="HAMAP-Rule" id="MF_00737"/>
    </source>
</evidence>
<name>HUTG_STAAE</name>
<gene>
    <name evidence="1" type="primary">hutG</name>
    <name type="ordered locus">NWMN_2235</name>
</gene>
<dbReference type="EC" id="3.5.3.8" evidence="1"/>
<dbReference type="EMBL" id="AP009351">
    <property type="protein sequence ID" value="BAF68507.1"/>
    <property type="molecule type" value="Genomic_DNA"/>
</dbReference>
<dbReference type="RefSeq" id="WP_000277968.1">
    <property type="nucleotide sequence ID" value="NZ_JBBIAE010000004.1"/>
</dbReference>
<dbReference type="SMR" id="A6QJH5"/>
<dbReference type="KEGG" id="sae:NWMN_2235"/>
<dbReference type="HOGENOM" id="CLU_039478_2_0_9"/>
<dbReference type="UniPathway" id="UPA00379">
    <property type="reaction ID" value="UER00552"/>
</dbReference>
<dbReference type="Proteomes" id="UP000006386">
    <property type="component" value="Chromosome"/>
</dbReference>
<dbReference type="GO" id="GO:0008783">
    <property type="term" value="F:agmatinase activity"/>
    <property type="evidence" value="ECO:0007669"/>
    <property type="project" value="TreeGrafter"/>
</dbReference>
<dbReference type="GO" id="GO:0050415">
    <property type="term" value="F:formimidoylglutamase activity"/>
    <property type="evidence" value="ECO:0007669"/>
    <property type="project" value="UniProtKB-UniRule"/>
</dbReference>
<dbReference type="GO" id="GO:0030145">
    <property type="term" value="F:manganese ion binding"/>
    <property type="evidence" value="ECO:0007669"/>
    <property type="project" value="UniProtKB-UniRule"/>
</dbReference>
<dbReference type="GO" id="GO:0019556">
    <property type="term" value="P:L-histidine catabolic process to glutamate and formamide"/>
    <property type="evidence" value="ECO:0007669"/>
    <property type="project" value="UniProtKB-UniPathway"/>
</dbReference>
<dbReference type="GO" id="GO:0019557">
    <property type="term" value="P:L-histidine catabolic process to glutamate and formate"/>
    <property type="evidence" value="ECO:0007669"/>
    <property type="project" value="UniProtKB-UniPathway"/>
</dbReference>
<dbReference type="GO" id="GO:0033389">
    <property type="term" value="P:putrescine biosynthetic process from arginine, via agmatine"/>
    <property type="evidence" value="ECO:0007669"/>
    <property type="project" value="TreeGrafter"/>
</dbReference>
<dbReference type="CDD" id="cd09988">
    <property type="entry name" value="Formimidoylglutamase"/>
    <property type="match status" value="1"/>
</dbReference>
<dbReference type="FunFam" id="3.40.800.10:FF:000015">
    <property type="entry name" value="Formimidoylglutamase"/>
    <property type="match status" value="1"/>
</dbReference>
<dbReference type="Gene3D" id="3.40.800.10">
    <property type="entry name" value="Ureohydrolase domain"/>
    <property type="match status" value="1"/>
</dbReference>
<dbReference type="HAMAP" id="MF_00737">
    <property type="entry name" value="Formimidoylglutam"/>
    <property type="match status" value="1"/>
</dbReference>
<dbReference type="InterPro" id="IPR005923">
    <property type="entry name" value="HutG"/>
</dbReference>
<dbReference type="InterPro" id="IPR006035">
    <property type="entry name" value="Ureohydrolase"/>
</dbReference>
<dbReference type="InterPro" id="IPR023696">
    <property type="entry name" value="Ureohydrolase_dom_sf"/>
</dbReference>
<dbReference type="NCBIfam" id="TIGR01227">
    <property type="entry name" value="hutG"/>
    <property type="match status" value="1"/>
</dbReference>
<dbReference type="PANTHER" id="PTHR11358">
    <property type="entry name" value="ARGINASE/AGMATINASE"/>
    <property type="match status" value="1"/>
</dbReference>
<dbReference type="PANTHER" id="PTHR11358:SF35">
    <property type="entry name" value="FORMIMIDOYLGLUTAMASE"/>
    <property type="match status" value="1"/>
</dbReference>
<dbReference type="Pfam" id="PF00491">
    <property type="entry name" value="Arginase"/>
    <property type="match status" value="1"/>
</dbReference>
<dbReference type="PIRSF" id="PIRSF036979">
    <property type="entry name" value="Arginase"/>
    <property type="match status" value="1"/>
</dbReference>
<dbReference type="SUPFAM" id="SSF52768">
    <property type="entry name" value="Arginase/deacetylase"/>
    <property type="match status" value="1"/>
</dbReference>
<dbReference type="PROSITE" id="PS51409">
    <property type="entry name" value="ARGINASE_2"/>
    <property type="match status" value="1"/>
</dbReference>
<keyword id="KW-0369">Histidine metabolism</keyword>
<keyword id="KW-0378">Hydrolase</keyword>
<keyword id="KW-0464">Manganese</keyword>
<keyword id="KW-0479">Metal-binding</keyword>
<organism>
    <name type="scientific">Staphylococcus aureus (strain Newman)</name>
    <dbReference type="NCBI Taxonomy" id="426430"/>
    <lineage>
        <taxon>Bacteria</taxon>
        <taxon>Bacillati</taxon>
        <taxon>Bacillota</taxon>
        <taxon>Bacilli</taxon>
        <taxon>Bacillales</taxon>
        <taxon>Staphylococcaceae</taxon>
        <taxon>Staphylococcus</taxon>
    </lineage>
</organism>
<proteinExistence type="inferred from homology"/>
<sequence length="311" mass="34513">MYKQGEPNLWTGRLDSETDPKKFRHFQTVTFEDLSKLEKSSMPSGVGILGYAVDKGVALNKGRIGAKEGPDAIKQAFAGLPDLNQCETLVDYGNVYHDHEELIDTQKEFAMLAAKSIANHRQTFLLGGGHDIAYAQYLATRKVYPTQSIGVINIDAHFDTRAEQQSTSGTSFRQILEEDENTDYLVLGIAQGGNTQSLFDYAKEKKIDYVFADELLSHVSPTIKDMIERFVHEHDVIMFTICMDVIDSAFAPGVSAPAVLGLYPHTVLELAKRIIPSDKVSSVSIAEMNPTYDADNRTAKLVANLVHHFLK</sequence>
<comment type="function">
    <text evidence="1">Catalyzes the conversion of N-formimidoyl-L-glutamate to L-glutamate and formamide.</text>
</comment>
<comment type="catalytic activity">
    <reaction evidence="1">
        <text>N-formimidoyl-L-glutamate + H2O = formamide + L-glutamate</text>
        <dbReference type="Rhea" id="RHEA:22492"/>
        <dbReference type="ChEBI" id="CHEBI:15377"/>
        <dbReference type="ChEBI" id="CHEBI:16397"/>
        <dbReference type="ChEBI" id="CHEBI:29985"/>
        <dbReference type="ChEBI" id="CHEBI:58928"/>
        <dbReference type="EC" id="3.5.3.8"/>
    </reaction>
</comment>
<comment type="cofactor">
    <cofactor evidence="1">
        <name>Mn(2+)</name>
        <dbReference type="ChEBI" id="CHEBI:29035"/>
    </cofactor>
    <text evidence="1">Binds 2 manganese ions per subunit.</text>
</comment>
<comment type="pathway">
    <text evidence="1">Amino-acid degradation; L-histidine degradation into L-glutamate; L-glutamate from N-formimidoyl-L-glutamate (hydrolase route): step 1/1.</text>
</comment>
<comment type="similarity">
    <text evidence="1">Belongs to the arginase family.</text>
</comment>